<keyword id="KW-0249">Electron transport</keyword>
<keyword id="KW-0349">Heme</keyword>
<keyword id="KW-0408">Iron</keyword>
<keyword id="KW-0472">Membrane</keyword>
<keyword id="KW-0479">Metal-binding</keyword>
<keyword id="KW-0602">Photosynthesis</keyword>
<keyword id="KW-0793">Thylakoid</keyword>
<keyword id="KW-0812">Transmembrane</keyword>
<keyword id="KW-1133">Transmembrane helix</keyword>
<keyword id="KW-0813">Transport</keyword>
<gene>
    <name evidence="1" type="primary">petB</name>
</gene>
<proteinExistence type="inferred from homology"/>
<evidence type="ECO:0000255" key="1">
    <source>
        <dbReference type="HAMAP-Rule" id="MF_00633"/>
    </source>
</evidence>
<comment type="function">
    <text evidence="1">Component of the cytochrome b6-f complex, which mediates electron transfer between photosystem II (PSII) and photosystem I (PSI), cyclic electron flow around PSI, and state transitions.</text>
</comment>
<comment type="cofactor">
    <cofactor evidence="1">
        <name>heme b</name>
        <dbReference type="ChEBI" id="CHEBI:60344"/>
    </cofactor>
    <text evidence="1">Binds 2 heme b groups non-covalently with two histidine residues as axial ligands.</text>
</comment>
<comment type="cofactor">
    <cofactor evidence="1">
        <name>heme c</name>
        <dbReference type="ChEBI" id="CHEBI:61717"/>
    </cofactor>
    <text evidence="1">Binds one heme group covalently by a single cysteine link with no axial amino acid ligand. This heme was named heme ci.</text>
</comment>
<comment type="subunit">
    <text evidence="1">The 4 large subunits of the cytochrome b6-f complex are cytochrome b6, subunit IV (17 kDa polypeptide, PetD), cytochrome f and the Rieske protein, while the 4 small subunits are PetG, PetL, PetM and PetN. The complex functions as a dimer.</text>
</comment>
<comment type="subcellular location">
    <subcellularLocation>
        <location evidence="1">Cellular thylakoid membrane</location>
        <topology evidence="1">Multi-pass membrane protein</topology>
    </subcellularLocation>
</comment>
<comment type="miscellaneous">
    <text evidence="1">Heme 1 (or BH or b566) is high-potential and absorbs at about 566 nm, and heme 2 (or BL or b562) is low-potential and absorbs at about 562 nm.</text>
</comment>
<comment type="similarity">
    <text evidence="1">Belongs to the cytochrome b family. PetB subfamily.</text>
</comment>
<name>CYB6_DESSP</name>
<organism>
    <name type="scientific">Desmonostoc sp. (strain PCC 7906)</name>
    <name type="common">Nostoc sp. (strain PCC 7906)</name>
    <dbReference type="NCBI Taxonomy" id="1181"/>
    <lineage>
        <taxon>Bacteria</taxon>
        <taxon>Bacillati</taxon>
        <taxon>Cyanobacteriota</taxon>
        <taxon>Cyanophyceae</taxon>
        <taxon>Nostocales</taxon>
        <taxon>Nostocaceae</taxon>
        <taxon>Desmonostoc</taxon>
    </lineage>
</organism>
<reference key="1">
    <citation type="journal article" date="1988" name="J. Biol. Chem.">
        <title>Characterization of two operons encoding the cytochrome b6-f complex of the cyanobacterium Nostoc PCC 7906. Highly conserved sequences but different gene organization than in chloroplasts.</title>
        <authorList>
            <person name="Kallas T."/>
            <person name="Spiller S."/>
            <person name="Malkin R."/>
        </authorList>
    </citation>
    <scope>NUCLEOTIDE SEQUENCE [GENOMIC DNA]</scope>
</reference>
<dbReference type="EMBL" id="J03967">
    <property type="protein sequence ID" value="AAA23330.1"/>
    <property type="molecule type" value="Genomic_DNA"/>
</dbReference>
<dbReference type="PIR" id="A30807">
    <property type="entry name" value="A30807"/>
</dbReference>
<dbReference type="SMR" id="P12122"/>
<dbReference type="GO" id="GO:0031676">
    <property type="term" value="C:plasma membrane-derived thylakoid membrane"/>
    <property type="evidence" value="ECO:0007669"/>
    <property type="project" value="UniProtKB-SubCell"/>
</dbReference>
<dbReference type="GO" id="GO:0045158">
    <property type="term" value="F:electron transporter, transferring electrons within cytochrome b6/f complex of photosystem II activity"/>
    <property type="evidence" value="ECO:0007669"/>
    <property type="project" value="UniProtKB-UniRule"/>
</dbReference>
<dbReference type="GO" id="GO:0046872">
    <property type="term" value="F:metal ion binding"/>
    <property type="evidence" value="ECO:0007669"/>
    <property type="project" value="UniProtKB-KW"/>
</dbReference>
<dbReference type="GO" id="GO:0016491">
    <property type="term" value="F:oxidoreductase activity"/>
    <property type="evidence" value="ECO:0007669"/>
    <property type="project" value="InterPro"/>
</dbReference>
<dbReference type="GO" id="GO:0015979">
    <property type="term" value="P:photosynthesis"/>
    <property type="evidence" value="ECO:0007669"/>
    <property type="project" value="UniProtKB-UniRule"/>
</dbReference>
<dbReference type="GO" id="GO:0022904">
    <property type="term" value="P:respiratory electron transport chain"/>
    <property type="evidence" value="ECO:0007669"/>
    <property type="project" value="InterPro"/>
</dbReference>
<dbReference type="CDD" id="cd00284">
    <property type="entry name" value="Cytochrome_b_N"/>
    <property type="match status" value="1"/>
</dbReference>
<dbReference type="FunFam" id="1.20.810.10:FF:000001">
    <property type="entry name" value="Cytochrome b6"/>
    <property type="match status" value="1"/>
</dbReference>
<dbReference type="Gene3D" id="1.20.810.10">
    <property type="entry name" value="Cytochrome Bc1 Complex, Chain C"/>
    <property type="match status" value="1"/>
</dbReference>
<dbReference type="HAMAP" id="MF_00633">
    <property type="entry name" value="Cytb6_f_cytb6"/>
    <property type="match status" value="1"/>
</dbReference>
<dbReference type="InterPro" id="IPR005797">
    <property type="entry name" value="Cyt_b/b6_N"/>
</dbReference>
<dbReference type="InterPro" id="IPR023530">
    <property type="entry name" value="Cyt_B6_PetB"/>
</dbReference>
<dbReference type="InterPro" id="IPR027387">
    <property type="entry name" value="Cytb/b6-like_sf"/>
</dbReference>
<dbReference type="InterPro" id="IPR048259">
    <property type="entry name" value="Cytochrome_b_N_euk/bac"/>
</dbReference>
<dbReference type="InterPro" id="IPR016174">
    <property type="entry name" value="Di-haem_cyt_TM"/>
</dbReference>
<dbReference type="NCBIfam" id="NF002990">
    <property type="entry name" value="PRK03735.1"/>
    <property type="match status" value="1"/>
</dbReference>
<dbReference type="PANTHER" id="PTHR19271">
    <property type="entry name" value="CYTOCHROME B"/>
    <property type="match status" value="1"/>
</dbReference>
<dbReference type="PANTHER" id="PTHR19271:SF16">
    <property type="entry name" value="CYTOCHROME B"/>
    <property type="match status" value="1"/>
</dbReference>
<dbReference type="Pfam" id="PF00033">
    <property type="entry name" value="Cytochrome_B"/>
    <property type="match status" value="1"/>
</dbReference>
<dbReference type="PIRSF" id="PIRSF000032">
    <property type="entry name" value="Cytochrome_b6"/>
    <property type="match status" value="1"/>
</dbReference>
<dbReference type="SUPFAM" id="SSF81342">
    <property type="entry name" value="Transmembrane di-heme cytochromes"/>
    <property type="match status" value="1"/>
</dbReference>
<dbReference type="PROSITE" id="PS51002">
    <property type="entry name" value="CYTB_NTER"/>
    <property type="match status" value="1"/>
</dbReference>
<protein>
    <recommendedName>
        <fullName evidence="1">Cytochrome b6</fullName>
    </recommendedName>
</protein>
<accession>P12122</accession>
<sequence length="215" mass="24260">MANVYDWFEERLEIQAIAEDVTSKYVPPHVNIFYCLGGITLTCFLIQFATGFAMTFYYKPTVAEAFSSVEYIMNEVNFGWLIRSIHRWSASMMVLMMILHVFRVYLTGGFKKPRELTWVSGVILAVITVSFGVTGYSLPWDQVGYWAVKIVSGVPEAIPVVGVLISDLLRGGSSVGQATLTRYYSAHTFVLPWLIAVFMLFHFLMIRKQGISGPL</sequence>
<feature type="chain" id="PRO_0000061828" description="Cytochrome b6">
    <location>
        <begin position="1"/>
        <end position="215"/>
    </location>
</feature>
<feature type="transmembrane region" description="Helical" evidence="1">
    <location>
        <begin position="32"/>
        <end position="52"/>
    </location>
</feature>
<feature type="transmembrane region" description="Helical" evidence="1">
    <location>
        <begin position="90"/>
        <end position="110"/>
    </location>
</feature>
<feature type="transmembrane region" description="Helical" evidence="1">
    <location>
        <begin position="116"/>
        <end position="136"/>
    </location>
</feature>
<feature type="transmembrane region" description="Helical" evidence="1">
    <location>
        <begin position="186"/>
        <end position="206"/>
    </location>
</feature>
<feature type="binding site" description="covalent" evidence="1">
    <location>
        <position position="35"/>
    </location>
    <ligand>
        <name>heme c</name>
        <dbReference type="ChEBI" id="CHEBI:61717"/>
    </ligand>
</feature>
<feature type="binding site" description="axial binding residue" evidence="1">
    <location>
        <position position="86"/>
    </location>
    <ligand>
        <name>heme b</name>
        <dbReference type="ChEBI" id="CHEBI:60344"/>
        <label>2</label>
    </ligand>
    <ligandPart>
        <name>Fe</name>
        <dbReference type="ChEBI" id="CHEBI:18248"/>
    </ligandPart>
</feature>
<feature type="binding site" description="axial binding residue" evidence="1">
    <location>
        <position position="100"/>
    </location>
    <ligand>
        <name>heme b</name>
        <dbReference type="ChEBI" id="CHEBI:60344"/>
        <label>1</label>
    </ligand>
    <ligandPart>
        <name>Fe</name>
        <dbReference type="ChEBI" id="CHEBI:18248"/>
    </ligandPart>
</feature>
<feature type="binding site" description="axial binding residue" evidence="1">
    <location>
        <position position="187"/>
    </location>
    <ligand>
        <name>heme b</name>
        <dbReference type="ChEBI" id="CHEBI:60344"/>
        <label>2</label>
    </ligand>
    <ligandPart>
        <name>Fe</name>
        <dbReference type="ChEBI" id="CHEBI:18248"/>
    </ligandPart>
</feature>
<feature type="binding site" description="axial binding residue" evidence="1">
    <location>
        <position position="202"/>
    </location>
    <ligand>
        <name>heme b</name>
        <dbReference type="ChEBI" id="CHEBI:60344"/>
        <label>1</label>
    </ligand>
    <ligandPart>
        <name>Fe</name>
        <dbReference type="ChEBI" id="CHEBI:18248"/>
    </ligandPart>
</feature>